<organism>
    <name type="scientific">Necromys temchuki</name>
    <name type="common">Temchuk's bolo mouse</name>
    <name type="synonym">Bolomys temchuki</name>
    <dbReference type="NCBI Taxonomy" id="240585"/>
    <lineage>
        <taxon>Eukaryota</taxon>
        <taxon>Metazoa</taxon>
        <taxon>Chordata</taxon>
        <taxon>Craniata</taxon>
        <taxon>Vertebrata</taxon>
        <taxon>Euteleostomi</taxon>
        <taxon>Mammalia</taxon>
        <taxon>Eutheria</taxon>
        <taxon>Euarchontoglires</taxon>
        <taxon>Glires</taxon>
        <taxon>Rodentia</taxon>
        <taxon>Myomorpha</taxon>
        <taxon>Muroidea</taxon>
        <taxon>Cricetidae</taxon>
        <taxon>Sigmodontinae</taxon>
        <taxon>Necromys</taxon>
    </lineage>
</organism>
<evidence type="ECO:0000250" key="1"/>
<evidence type="ECO:0000250" key="2">
    <source>
        <dbReference type="UniProtKB" id="P00157"/>
    </source>
</evidence>
<evidence type="ECO:0000255" key="3">
    <source>
        <dbReference type="PROSITE-ProRule" id="PRU00967"/>
    </source>
</evidence>
<evidence type="ECO:0000255" key="4">
    <source>
        <dbReference type="PROSITE-ProRule" id="PRU00968"/>
    </source>
</evidence>
<sequence length="379" mass="42716">MKIMRKNHPLLKIVNHSFIDLPTPSNISSWWNFGSLLGICLMIQILTGLFLAMHYTSDTTTAFSSVAHICRDVNYGWLIRYLHANGASMFFICLFIHVGRGIYYGSYTLSETWNIGIILFLTTMATAFVGYVLPWGQMSFWGATVITNLLSAIPYIGSTLVEWIWGGFSVDKATLTRFFAFHFILPFIITALVLVHLLFLHETGSNNPSGLNSDSDKIPFHPYYTFKDLLGILLLLMALMILALFFPDILGDPDNYTPANPLNTPAHIKPEWYFLFAYAILRSIPNKLGGVLALILSILILATFPLLNTSKQHGLIYRPITQTIYWIFIANLLVLTWIGGQPVEYPFTMIGQIASITYFGIIIILMPISNTIENNIIKL</sequence>
<name>CYB_NECTE</name>
<protein>
    <recommendedName>
        <fullName>Cytochrome b</fullName>
    </recommendedName>
    <alternativeName>
        <fullName>Complex III subunit 3</fullName>
    </alternativeName>
    <alternativeName>
        <fullName>Complex III subunit III</fullName>
    </alternativeName>
    <alternativeName>
        <fullName>Cytochrome b-c1 complex subunit 3</fullName>
    </alternativeName>
    <alternativeName>
        <fullName>Ubiquinol-cytochrome-c reductase complex cytochrome b subunit</fullName>
    </alternativeName>
</protein>
<gene>
    <name type="primary">MT-CYB</name>
    <name type="synonym">COB</name>
    <name type="synonym">CYTB</name>
    <name type="synonym">MTCYB</name>
</gene>
<dbReference type="EMBL" id="AY273913">
    <property type="protein sequence ID" value="AAQ20030.1"/>
    <property type="molecule type" value="Genomic_DNA"/>
</dbReference>
<dbReference type="EMBL" id="AY273914">
    <property type="protein sequence ID" value="AAQ20031.1"/>
    <property type="molecule type" value="Genomic_DNA"/>
</dbReference>
<dbReference type="SMR" id="Q6WRG7"/>
<dbReference type="GO" id="GO:0005743">
    <property type="term" value="C:mitochondrial inner membrane"/>
    <property type="evidence" value="ECO:0007669"/>
    <property type="project" value="UniProtKB-SubCell"/>
</dbReference>
<dbReference type="GO" id="GO:0045275">
    <property type="term" value="C:respiratory chain complex III"/>
    <property type="evidence" value="ECO:0007669"/>
    <property type="project" value="InterPro"/>
</dbReference>
<dbReference type="GO" id="GO:0046872">
    <property type="term" value="F:metal ion binding"/>
    <property type="evidence" value="ECO:0007669"/>
    <property type="project" value="UniProtKB-KW"/>
</dbReference>
<dbReference type="GO" id="GO:0008121">
    <property type="term" value="F:ubiquinol-cytochrome-c reductase activity"/>
    <property type="evidence" value="ECO:0007669"/>
    <property type="project" value="InterPro"/>
</dbReference>
<dbReference type="GO" id="GO:0006122">
    <property type="term" value="P:mitochondrial electron transport, ubiquinol to cytochrome c"/>
    <property type="evidence" value="ECO:0007669"/>
    <property type="project" value="TreeGrafter"/>
</dbReference>
<dbReference type="CDD" id="cd00290">
    <property type="entry name" value="cytochrome_b_C"/>
    <property type="match status" value="1"/>
</dbReference>
<dbReference type="CDD" id="cd00284">
    <property type="entry name" value="Cytochrome_b_N"/>
    <property type="match status" value="1"/>
</dbReference>
<dbReference type="FunFam" id="1.20.810.10:FF:000002">
    <property type="entry name" value="Cytochrome b"/>
    <property type="match status" value="1"/>
</dbReference>
<dbReference type="Gene3D" id="1.20.810.10">
    <property type="entry name" value="Cytochrome Bc1 Complex, Chain C"/>
    <property type="match status" value="1"/>
</dbReference>
<dbReference type="InterPro" id="IPR005798">
    <property type="entry name" value="Cyt_b/b6_C"/>
</dbReference>
<dbReference type="InterPro" id="IPR036150">
    <property type="entry name" value="Cyt_b/b6_C_sf"/>
</dbReference>
<dbReference type="InterPro" id="IPR005797">
    <property type="entry name" value="Cyt_b/b6_N"/>
</dbReference>
<dbReference type="InterPro" id="IPR027387">
    <property type="entry name" value="Cytb/b6-like_sf"/>
</dbReference>
<dbReference type="InterPro" id="IPR030689">
    <property type="entry name" value="Cytochrome_b"/>
</dbReference>
<dbReference type="InterPro" id="IPR048260">
    <property type="entry name" value="Cytochrome_b_C_euk/bac"/>
</dbReference>
<dbReference type="InterPro" id="IPR048259">
    <property type="entry name" value="Cytochrome_b_N_euk/bac"/>
</dbReference>
<dbReference type="InterPro" id="IPR016174">
    <property type="entry name" value="Di-haem_cyt_TM"/>
</dbReference>
<dbReference type="PANTHER" id="PTHR19271">
    <property type="entry name" value="CYTOCHROME B"/>
    <property type="match status" value="1"/>
</dbReference>
<dbReference type="PANTHER" id="PTHR19271:SF16">
    <property type="entry name" value="CYTOCHROME B"/>
    <property type="match status" value="1"/>
</dbReference>
<dbReference type="Pfam" id="PF00032">
    <property type="entry name" value="Cytochrom_B_C"/>
    <property type="match status" value="1"/>
</dbReference>
<dbReference type="Pfam" id="PF00033">
    <property type="entry name" value="Cytochrome_B"/>
    <property type="match status" value="1"/>
</dbReference>
<dbReference type="PIRSF" id="PIRSF038885">
    <property type="entry name" value="COB"/>
    <property type="match status" value="1"/>
</dbReference>
<dbReference type="SUPFAM" id="SSF81648">
    <property type="entry name" value="a domain/subunit of cytochrome bc1 complex (Ubiquinol-cytochrome c reductase)"/>
    <property type="match status" value="1"/>
</dbReference>
<dbReference type="SUPFAM" id="SSF81342">
    <property type="entry name" value="Transmembrane di-heme cytochromes"/>
    <property type="match status" value="1"/>
</dbReference>
<dbReference type="PROSITE" id="PS51003">
    <property type="entry name" value="CYTB_CTER"/>
    <property type="match status" value="1"/>
</dbReference>
<dbReference type="PROSITE" id="PS51002">
    <property type="entry name" value="CYTB_NTER"/>
    <property type="match status" value="1"/>
</dbReference>
<comment type="function">
    <text evidence="2">Component of the ubiquinol-cytochrome c reductase complex (complex III or cytochrome b-c1 complex) that is part of the mitochondrial respiratory chain. The b-c1 complex mediates electron transfer from ubiquinol to cytochrome c. Contributes to the generation of a proton gradient across the mitochondrial membrane that is then used for ATP synthesis.</text>
</comment>
<comment type="cofactor">
    <cofactor evidence="2">
        <name>heme b</name>
        <dbReference type="ChEBI" id="CHEBI:60344"/>
    </cofactor>
    <text evidence="2">Binds 2 heme b groups non-covalently.</text>
</comment>
<comment type="subunit">
    <text evidence="2">The cytochrome bc1 complex contains 11 subunits: 3 respiratory subunits (MT-CYB, CYC1 and UQCRFS1), 2 core proteins (UQCRC1 and UQCRC2) and 6 low-molecular weight proteins (UQCRH/QCR6, UQCRB/QCR7, UQCRQ/QCR8, UQCR10/QCR9, UQCR11/QCR10 and a cleavage product of UQCRFS1). This cytochrome bc1 complex then forms a dimer.</text>
</comment>
<comment type="subcellular location">
    <subcellularLocation>
        <location evidence="2">Mitochondrion inner membrane</location>
        <topology evidence="2">Multi-pass membrane protein</topology>
    </subcellularLocation>
</comment>
<comment type="miscellaneous">
    <text evidence="1">Heme 1 (or BL or b562) is low-potential and absorbs at about 562 nm, and heme 2 (or BH or b566) is high-potential and absorbs at about 566 nm.</text>
</comment>
<comment type="similarity">
    <text evidence="3 4">Belongs to the cytochrome b family.</text>
</comment>
<comment type="caution">
    <text evidence="2">The full-length protein contains only eight transmembrane helices, not nine as predicted by bioinformatics tools.</text>
</comment>
<proteinExistence type="inferred from homology"/>
<accession>Q6WRG7</accession>
<accession>Q6WRG6</accession>
<keyword id="KW-0249">Electron transport</keyword>
<keyword id="KW-0349">Heme</keyword>
<keyword id="KW-0408">Iron</keyword>
<keyword id="KW-0472">Membrane</keyword>
<keyword id="KW-0479">Metal-binding</keyword>
<keyword id="KW-0496">Mitochondrion</keyword>
<keyword id="KW-0999">Mitochondrion inner membrane</keyword>
<keyword id="KW-0679">Respiratory chain</keyword>
<keyword id="KW-0812">Transmembrane</keyword>
<keyword id="KW-1133">Transmembrane helix</keyword>
<keyword id="KW-0813">Transport</keyword>
<keyword id="KW-0830">Ubiquinone</keyword>
<reference key="1">
    <citation type="journal article" date="2003" name="Cladistics">
        <title>Phylogenetics of Sigmodontinae (Rodentia, Muroidea, Cricetidae), with special reference to the akodont group, and with additional comments on historical biogeography.</title>
        <authorList>
            <person name="D'Elia G."/>
        </authorList>
    </citation>
    <scope>NUCLEOTIDE SEQUENCE [GENOMIC DNA]</scope>
    <source>
        <strain>Isolate UP 223</strain>
        <strain>Isolate UP22</strain>
    </source>
</reference>
<geneLocation type="mitochondrion"/>
<feature type="chain" id="PRO_0000257874" description="Cytochrome b">
    <location>
        <begin position="1"/>
        <end position="379"/>
    </location>
</feature>
<feature type="transmembrane region" description="Helical" evidence="2">
    <location>
        <begin position="33"/>
        <end position="53"/>
    </location>
</feature>
<feature type="transmembrane region" description="Helical" evidence="2">
    <location>
        <begin position="77"/>
        <end position="98"/>
    </location>
</feature>
<feature type="transmembrane region" description="Helical" evidence="2">
    <location>
        <begin position="113"/>
        <end position="133"/>
    </location>
</feature>
<feature type="transmembrane region" description="Helical" evidence="2">
    <location>
        <begin position="178"/>
        <end position="198"/>
    </location>
</feature>
<feature type="transmembrane region" description="Helical" evidence="2">
    <location>
        <begin position="226"/>
        <end position="246"/>
    </location>
</feature>
<feature type="transmembrane region" description="Helical" evidence="2">
    <location>
        <begin position="288"/>
        <end position="308"/>
    </location>
</feature>
<feature type="transmembrane region" description="Helical" evidence="2">
    <location>
        <begin position="320"/>
        <end position="340"/>
    </location>
</feature>
<feature type="transmembrane region" description="Helical" evidence="2">
    <location>
        <begin position="347"/>
        <end position="367"/>
    </location>
</feature>
<feature type="binding site" description="axial binding residue" evidence="2">
    <location>
        <position position="83"/>
    </location>
    <ligand>
        <name>heme b</name>
        <dbReference type="ChEBI" id="CHEBI:60344"/>
        <label>b562</label>
    </ligand>
    <ligandPart>
        <name>Fe</name>
        <dbReference type="ChEBI" id="CHEBI:18248"/>
    </ligandPart>
</feature>
<feature type="binding site" description="axial binding residue" evidence="2">
    <location>
        <position position="97"/>
    </location>
    <ligand>
        <name>heme b</name>
        <dbReference type="ChEBI" id="CHEBI:60344"/>
        <label>b566</label>
    </ligand>
    <ligandPart>
        <name>Fe</name>
        <dbReference type="ChEBI" id="CHEBI:18248"/>
    </ligandPart>
</feature>
<feature type="binding site" description="axial binding residue" evidence="2">
    <location>
        <position position="182"/>
    </location>
    <ligand>
        <name>heme b</name>
        <dbReference type="ChEBI" id="CHEBI:60344"/>
        <label>b562</label>
    </ligand>
    <ligandPart>
        <name>Fe</name>
        <dbReference type="ChEBI" id="CHEBI:18248"/>
    </ligandPart>
</feature>
<feature type="binding site" description="axial binding residue" evidence="2">
    <location>
        <position position="196"/>
    </location>
    <ligand>
        <name>heme b</name>
        <dbReference type="ChEBI" id="CHEBI:60344"/>
        <label>b566</label>
    </ligand>
    <ligandPart>
        <name>Fe</name>
        <dbReference type="ChEBI" id="CHEBI:18248"/>
    </ligandPart>
</feature>
<feature type="binding site" evidence="2">
    <location>
        <position position="201"/>
    </location>
    <ligand>
        <name>a ubiquinone</name>
        <dbReference type="ChEBI" id="CHEBI:16389"/>
    </ligand>
</feature>
<feature type="sequence variant" description="In strain: Isolate UP22.">
    <original>I</original>
    <variation>V</variation>
    <location>
        <position position="353"/>
    </location>
</feature>
<feature type="sequence variant" description="In strain: Isolate UP22.">
    <original>G</original>
    <variation>V</variation>
    <location>
        <position position="360"/>
    </location>
</feature>